<proteinExistence type="inferred from homology"/>
<feature type="chain" id="PRO_0000127594" description="Cuticle collagen 40">
    <location>
        <begin position="1"/>
        <end position="302"/>
    </location>
</feature>
<feature type="region of interest" description="Disordered" evidence="1">
    <location>
        <begin position="79"/>
        <end position="103"/>
    </location>
</feature>
<feature type="region of interest" description="Triple-helical region">
    <location>
        <begin position="114"/>
        <end position="143"/>
    </location>
</feature>
<feature type="region of interest" description="Disordered" evidence="1">
    <location>
        <begin position="119"/>
        <end position="302"/>
    </location>
</feature>
<feature type="region of interest" description="Triple-helical region">
    <location>
        <begin position="162"/>
        <end position="185"/>
    </location>
</feature>
<feature type="region of interest" description="Triple-helical region">
    <location>
        <begin position="189"/>
        <end position="221"/>
    </location>
</feature>
<feature type="region of interest" description="Triple-helical region">
    <location>
        <begin position="226"/>
        <end position="252"/>
    </location>
</feature>
<feature type="region of interest" description="Triple-helical region">
    <location>
        <begin position="255"/>
        <end position="290"/>
    </location>
</feature>
<feature type="compositionally biased region" description="Gly residues" evidence="1">
    <location>
        <begin position="91"/>
        <end position="103"/>
    </location>
</feature>
<feature type="compositionally biased region" description="Low complexity" evidence="1">
    <location>
        <begin position="137"/>
        <end position="154"/>
    </location>
</feature>
<feature type="compositionally biased region" description="Pro residues" evidence="1">
    <location>
        <begin position="194"/>
        <end position="203"/>
    </location>
</feature>
<feature type="compositionally biased region" description="Low complexity" evidence="1">
    <location>
        <begin position="205"/>
        <end position="234"/>
    </location>
</feature>
<feature type="compositionally biased region" description="Low complexity" evidence="1">
    <location>
        <begin position="245"/>
        <end position="281"/>
    </location>
</feature>
<feature type="compositionally biased region" description="Pro residues" evidence="1">
    <location>
        <begin position="293"/>
        <end position="302"/>
    </location>
</feature>
<feature type="sequence conflict" description="In Ref. 1; AAA17726." evidence="2" ref="1">
    <original>EEKQKIAEAESLKKLAF</original>
    <variation>KLTEN</variation>
    <location>
        <begin position="2"/>
        <end position="18"/>
    </location>
</feature>
<feature type="sequence conflict" description="In Ref. 1; AAA17726." evidence="2" ref="1">
    <original>TA</original>
    <variation>Q</variation>
    <location>
        <begin position="30"/>
        <end position="31"/>
    </location>
</feature>
<feature type="sequence conflict" description="In Ref. 1; AAA17726." evidence="2" ref="1">
    <original>V</original>
    <variation>VQYFLKVHGVKKNYFQV</variation>
    <location>
        <position position="53"/>
    </location>
</feature>
<feature type="sequence conflict" description="In Ref. 1; AAA17726." evidence="2" ref="1">
    <original>C</original>
    <variation>S</variation>
    <location>
        <position position="56"/>
    </location>
</feature>
<feature type="sequence conflict" description="In Ref. 1; AAA17726." evidence="2" ref="1">
    <original>G</original>
    <variation>E</variation>
    <location>
        <position position="100"/>
    </location>
</feature>
<feature type="sequence conflict" description="In Ref. 1; AAA17726." evidence="2" ref="1">
    <original>A</original>
    <variation>P</variation>
    <location>
        <position position="167"/>
    </location>
</feature>
<feature type="sequence conflict" description="In Ref. 1; AAA17726." evidence="2" ref="1">
    <original>A</original>
    <variation>P</variation>
    <location>
        <position position="173"/>
    </location>
</feature>
<feature type="sequence conflict" description="In Ref. 1; AAA17726." evidence="2" ref="1">
    <original>AGA</original>
    <variation>EGAPGE</variation>
    <location>
        <begin position="179"/>
        <end position="181"/>
    </location>
</feature>
<feature type="sequence conflict" description="In Ref. 1; AAA17726." evidence="2" ref="1">
    <original>G</original>
    <variation>R</variation>
    <location>
        <position position="188"/>
    </location>
</feature>
<feature type="sequence conflict" description="In Ref. 1; AAA17726." evidence="2" ref="1">
    <original>EGP</original>
    <variation>VGE</variation>
    <location>
        <begin position="191"/>
        <end position="193"/>
    </location>
</feature>
<feature type="sequence conflict" description="In Ref. 1; AAA17726." evidence="2" ref="1">
    <original>PA</original>
    <variation>TS</variation>
    <location>
        <begin position="202"/>
        <end position="203"/>
    </location>
</feature>
<dbReference type="EMBL" id="L15419">
    <property type="protein sequence ID" value="AAA17726.1"/>
    <property type="molecule type" value="Genomic_DNA"/>
</dbReference>
<dbReference type="EMBL" id="FO080410">
    <property type="protein sequence ID" value="CCD63495.1"/>
    <property type="molecule type" value="Genomic_DNA"/>
</dbReference>
<dbReference type="PIR" id="T32458">
    <property type="entry name" value="T32458"/>
</dbReference>
<dbReference type="PIR" id="T37286">
    <property type="entry name" value="T37286"/>
</dbReference>
<dbReference type="RefSeq" id="NP_493913.2">
    <property type="nucleotide sequence ID" value="NM_061512.5"/>
</dbReference>
<dbReference type="SMR" id="P34804"/>
<dbReference type="FunCoup" id="P34804">
    <property type="interactions" value="54"/>
</dbReference>
<dbReference type="STRING" id="6239.T13B5.4.1"/>
<dbReference type="PaxDb" id="6239-T13B5.4"/>
<dbReference type="EnsemblMetazoa" id="T13B5.4.1">
    <property type="protein sequence ID" value="T13B5.4.1"/>
    <property type="gene ID" value="WBGene00000617"/>
</dbReference>
<dbReference type="GeneID" id="173495"/>
<dbReference type="KEGG" id="cel:CELE_T13B5.4"/>
<dbReference type="UCSC" id="T13B5.4">
    <property type="organism name" value="c. elegans"/>
</dbReference>
<dbReference type="AGR" id="WB:WBGene00000617"/>
<dbReference type="CTD" id="173495"/>
<dbReference type="WormBase" id="T13B5.4">
    <property type="protein sequence ID" value="CE45752"/>
    <property type="gene ID" value="WBGene00000617"/>
    <property type="gene designation" value="col-40"/>
</dbReference>
<dbReference type="eggNOG" id="KOG3544">
    <property type="taxonomic scope" value="Eukaryota"/>
</dbReference>
<dbReference type="GeneTree" id="ENSGT00970000196518"/>
<dbReference type="HOGENOM" id="CLU_001074_4_2_1"/>
<dbReference type="InParanoid" id="P34804"/>
<dbReference type="OMA" id="FHRFETV"/>
<dbReference type="OrthoDB" id="5870983at2759"/>
<dbReference type="PRO" id="PR:P34804"/>
<dbReference type="Proteomes" id="UP000001940">
    <property type="component" value="Chromosome II"/>
</dbReference>
<dbReference type="Bgee" id="WBGene00000617">
    <property type="expression patterns" value="Expressed in adult organism and 1 other cell type or tissue"/>
</dbReference>
<dbReference type="GO" id="GO:0005581">
    <property type="term" value="C:collagen trimer"/>
    <property type="evidence" value="ECO:0007669"/>
    <property type="project" value="UniProtKB-KW"/>
</dbReference>
<dbReference type="GO" id="GO:0005576">
    <property type="term" value="C:extracellular region"/>
    <property type="evidence" value="ECO:0000303"/>
    <property type="project" value="UniProtKB"/>
</dbReference>
<dbReference type="GO" id="GO:0042302">
    <property type="term" value="F:structural constituent of cuticle"/>
    <property type="evidence" value="ECO:0000303"/>
    <property type="project" value="UniProtKB"/>
</dbReference>
<dbReference type="GO" id="GO:0040002">
    <property type="term" value="P:collagen and cuticulin-based cuticle development"/>
    <property type="evidence" value="ECO:0000303"/>
    <property type="project" value="UniProtKB"/>
</dbReference>
<dbReference type="InterPro" id="IPR002486">
    <property type="entry name" value="Col_cuticle_N"/>
</dbReference>
<dbReference type="InterPro" id="IPR008160">
    <property type="entry name" value="Collagen"/>
</dbReference>
<dbReference type="PANTHER" id="PTHR24637">
    <property type="entry name" value="COLLAGEN"/>
    <property type="match status" value="1"/>
</dbReference>
<dbReference type="PANTHER" id="PTHR24637:SF315">
    <property type="entry name" value="CUTICLE COLLAGEN 40"/>
    <property type="match status" value="1"/>
</dbReference>
<dbReference type="Pfam" id="PF01484">
    <property type="entry name" value="Col_cuticle_N"/>
    <property type="match status" value="1"/>
</dbReference>
<dbReference type="Pfam" id="PF01391">
    <property type="entry name" value="Collagen"/>
    <property type="match status" value="2"/>
</dbReference>
<dbReference type="SMART" id="SM01088">
    <property type="entry name" value="Col_cuticle_N"/>
    <property type="match status" value="1"/>
</dbReference>
<organism>
    <name type="scientific">Caenorhabditis elegans</name>
    <dbReference type="NCBI Taxonomy" id="6239"/>
    <lineage>
        <taxon>Eukaryota</taxon>
        <taxon>Metazoa</taxon>
        <taxon>Ecdysozoa</taxon>
        <taxon>Nematoda</taxon>
        <taxon>Chromadorea</taxon>
        <taxon>Rhabditida</taxon>
        <taxon>Rhabditina</taxon>
        <taxon>Rhabditomorpha</taxon>
        <taxon>Rhabditoidea</taxon>
        <taxon>Rhabditidae</taxon>
        <taxon>Peloderinae</taxon>
        <taxon>Caenorhabditis</taxon>
    </lineage>
</organism>
<reference key="1">
    <citation type="journal article" date="1993" name="Gene">
        <title>Identification, sequence and expression patterns of the Caenorhabditis elegans col-36 and col-40 collagen-encoding genes.</title>
        <authorList>
            <person name="Levy A.D."/>
            <person name="Kramer J.M."/>
        </authorList>
    </citation>
    <scope>NUCLEOTIDE SEQUENCE [GENOMIC DNA]</scope>
    <source>
        <strain>Bristol N2</strain>
    </source>
</reference>
<reference key="2">
    <citation type="journal article" date="1998" name="Science">
        <title>Genome sequence of the nematode C. elegans: a platform for investigating biology.</title>
        <authorList>
            <consortium name="The C. elegans sequencing consortium"/>
        </authorList>
    </citation>
    <scope>NUCLEOTIDE SEQUENCE [LARGE SCALE GENOMIC DNA]</scope>
    <source>
        <strain>Bristol N2</strain>
    </source>
</reference>
<protein>
    <recommendedName>
        <fullName>Cuticle collagen 40</fullName>
    </recommendedName>
</protein>
<keyword id="KW-0176">Collagen</keyword>
<keyword id="KW-0193">Cuticle</keyword>
<keyword id="KW-1015">Disulfide bond</keyword>
<keyword id="KW-1185">Reference proteome</keyword>
<keyword id="KW-0677">Repeat</keyword>
<name>COL40_CAEEL</name>
<gene>
    <name type="primary">col-40</name>
    <name type="ORF">T13B5.4</name>
</gene>
<accession>P34804</accession>
<accession>O17374</accession>
<evidence type="ECO:0000256" key="1">
    <source>
        <dbReference type="SAM" id="MobiDB-lite"/>
    </source>
</evidence>
<evidence type="ECO:0000305" key="2"/>
<sequence length="302" mass="28130">MEEKQKIAEAESLKKLAFFGISVSTIATLTAIIAVPMLYNYMQHVQSSLQNEVEFCKHRTDGLWDEFHRFETVKGVDSRIKRDTRSRRGGYAEGGAAAGGGGGGGGSCCSCGIGAAGPAGAPGKDGAPGEDGKAGNPGTAGSDAEAAAAPTASDFCFDCPPGPAGPAGGPGPAGPPGPAGADGNTPSGGGEGPAGPPGPPGPAGNPGTDGAPGNPGAPGQVTETPGTPGPAGAAGPPGPPGPAGNPGSAGASEPGPAGPAGDAGPDGAPGNAGAPGAPGEAGAPGSGGGCDHCPPPRTAPGY</sequence>
<comment type="function">
    <text>Nematode cuticles are composed largely of collagen-like proteins. The cuticle functions both as an exoskeleton and as a barrier to protect the worm from its environment.</text>
</comment>
<comment type="subunit">
    <text>Collagen polypeptide chains are complexed within the cuticle by disulfide bonds and other types of covalent cross-links.</text>
</comment>
<comment type="similarity">
    <text evidence="2">Belongs to the cuticular collagen family.</text>
</comment>